<organism>
    <name type="scientific">Gibberella zeae (strain ATCC MYA-4620 / CBS 123657 / FGSC 9075 / NRRL 31084 / PH-1)</name>
    <name type="common">Wheat head blight fungus</name>
    <name type="synonym">Fusarium graminearum</name>
    <dbReference type="NCBI Taxonomy" id="229533"/>
    <lineage>
        <taxon>Eukaryota</taxon>
        <taxon>Fungi</taxon>
        <taxon>Dikarya</taxon>
        <taxon>Ascomycota</taxon>
        <taxon>Pezizomycotina</taxon>
        <taxon>Sordariomycetes</taxon>
        <taxon>Hypocreomycetidae</taxon>
        <taxon>Hypocreales</taxon>
        <taxon>Nectriaceae</taxon>
        <taxon>Fusarium</taxon>
    </lineage>
</organism>
<sequence>MYKYGTVVDPAMTTNRRSRLSGFRCASTARVTATLLLSFLAFSPSSASSDFGDRFHDDIVLPPGPVLPSAPEIPEPAEHTFSLRHIYHHGTHLHPSLHRKRDVVHEQSRVYLAAEDDFSEYDILRLKAKSRPEPIHRLADRRPSVVDPMVAESRQRGYAAVLDASAWTMDQVSSPDIKDKDTVLTLALMTANAYVEHDTDADWEDVGERWNRSADFGWESDGLRGHVFVDDTNSTIVIGLKGTTTAVFDGEGTTTNDKVNDNLFFSCCCAQQGQWTWHQVCDCATGTYSCNNTCVVQALREENRYYGAARELYSNVTELYPDAQVWLTGHSLGGAVTSMLGMTYGLPVVTFEAVPEALPASRLGLPVPPGASAEYPQMRENTGTFHFGHTADPVYIGTCNGATASCTYGGYAMESTCHAGYECVYDVVADKGWRVGIGTHRIRSVIDDVIKKYDGVPECKRTPECRDCAQWKMYESNGTETTTTSSPSTTSTTRTRTRTSTCETPGWWGCLDKTTPVTTTTSTTSSSTSTCKTPGWFGCKDKTTSESSTTTTTEASPTTTCETPGRFWGCRDEVEATTTAKPGQVTNVPVTAAPTGTTDDSLSTALPETQRCLARNWFGICKEWAIDDLEFATDEM</sequence>
<protein>
    <recommendedName>
        <fullName evidence="1">Putative lipase ATG15</fullName>
        <ecNumber evidence="1">3.1.1.3</ecNumber>
    </recommendedName>
    <alternativeName>
        <fullName evidence="6">Autophagy-related protein 15</fullName>
    </alternativeName>
</protein>
<gene>
    <name evidence="6" type="primary">ATG15</name>
    <name type="ORF">FG02519</name>
    <name type="ORF">FGRAMPH1_01T06045</name>
</gene>
<dbReference type="EC" id="3.1.1.3" evidence="1"/>
<dbReference type="EMBL" id="HG970332">
    <property type="protein sequence ID" value="CEF74827.1"/>
    <property type="molecule type" value="Genomic_DNA"/>
</dbReference>
<dbReference type="RefSeq" id="XP_011318453.1">
    <property type="nucleotide sequence ID" value="XM_011320151.1"/>
</dbReference>
<dbReference type="FunCoup" id="I1RFN8">
    <property type="interactions" value="58"/>
</dbReference>
<dbReference type="STRING" id="229533.I1RFN8"/>
<dbReference type="ESTHER" id="gibze-I1RFN8">
    <property type="family name" value="ATG15-related-lipase"/>
</dbReference>
<dbReference type="GlyCosmos" id="I1RFN8">
    <property type="glycosylation" value="5 sites, No reported glycans"/>
</dbReference>
<dbReference type="KEGG" id="fgr:FGSG_02519"/>
<dbReference type="VEuPathDB" id="FungiDB:FGRAMPH1_01G06045"/>
<dbReference type="eggNOG" id="KOG4540">
    <property type="taxonomic scope" value="Eukaryota"/>
</dbReference>
<dbReference type="HOGENOM" id="CLU_028295_0_1_1"/>
<dbReference type="InParanoid" id="I1RFN8"/>
<dbReference type="OrthoDB" id="81745at110618"/>
<dbReference type="PHI-base" id="PHI:1166"/>
<dbReference type="Proteomes" id="UP000070720">
    <property type="component" value="Chromosome 1"/>
</dbReference>
<dbReference type="GO" id="GO:0032585">
    <property type="term" value="C:multivesicular body membrane"/>
    <property type="evidence" value="ECO:0007669"/>
    <property type="project" value="UniProtKB-SubCell"/>
</dbReference>
<dbReference type="GO" id="GO:0005775">
    <property type="term" value="C:vacuolar lumen"/>
    <property type="evidence" value="ECO:0007669"/>
    <property type="project" value="TreeGrafter"/>
</dbReference>
<dbReference type="GO" id="GO:0004620">
    <property type="term" value="F:phospholipase activity"/>
    <property type="evidence" value="ECO:0007669"/>
    <property type="project" value="TreeGrafter"/>
</dbReference>
<dbReference type="GO" id="GO:0004806">
    <property type="term" value="F:triacylglycerol lipase activity"/>
    <property type="evidence" value="ECO:0007669"/>
    <property type="project" value="UniProtKB-EC"/>
</dbReference>
<dbReference type="GO" id="GO:0034496">
    <property type="term" value="P:multivesicular body membrane disassembly"/>
    <property type="evidence" value="ECO:0007669"/>
    <property type="project" value="TreeGrafter"/>
</dbReference>
<dbReference type="GO" id="GO:0046461">
    <property type="term" value="P:neutral lipid catabolic process"/>
    <property type="evidence" value="ECO:0007669"/>
    <property type="project" value="TreeGrafter"/>
</dbReference>
<dbReference type="GO" id="GO:0006660">
    <property type="term" value="P:phosphatidylserine catabolic process"/>
    <property type="evidence" value="ECO:0007669"/>
    <property type="project" value="TreeGrafter"/>
</dbReference>
<dbReference type="GO" id="GO:0034727">
    <property type="term" value="P:piecemeal microautophagy of the nucleus"/>
    <property type="evidence" value="ECO:0007669"/>
    <property type="project" value="TreeGrafter"/>
</dbReference>
<dbReference type="CDD" id="cd00519">
    <property type="entry name" value="Lipase_3"/>
    <property type="match status" value="1"/>
</dbReference>
<dbReference type="FunFam" id="3.40.50.1820:FF:000129">
    <property type="entry name" value="Autophagy related lipase Atg15, putative"/>
    <property type="match status" value="1"/>
</dbReference>
<dbReference type="Gene3D" id="3.40.50.1820">
    <property type="entry name" value="alpha/beta hydrolase"/>
    <property type="match status" value="1"/>
</dbReference>
<dbReference type="InterPro" id="IPR029058">
    <property type="entry name" value="AB_hydrolase_fold"/>
</dbReference>
<dbReference type="InterPro" id="IPR050805">
    <property type="entry name" value="ATG15_Lipase"/>
</dbReference>
<dbReference type="InterPro" id="IPR002921">
    <property type="entry name" value="Fungal_lipase-type"/>
</dbReference>
<dbReference type="PANTHER" id="PTHR47175">
    <property type="entry name" value="LIPASE ATG15-RELATED"/>
    <property type="match status" value="1"/>
</dbReference>
<dbReference type="PANTHER" id="PTHR47175:SF2">
    <property type="entry name" value="LIPASE ATG15-RELATED"/>
    <property type="match status" value="1"/>
</dbReference>
<dbReference type="Pfam" id="PF01764">
    <property type="entry name" value="Lipase_3"/>
    <property type="match status" value="1"/>
</dbReference>
<dbReference type="SUPFAM" id="SSF53474">
    <property type="entry name" value="alpha/beta-Hydrolases"/>
    <property type="match status" value="1"/>
</dbReference>
<dbReference type="PROSITE" id="PS00120">
    <property type="entry name" value="LIPASE_SER"/>
    <property type="match status" value="1"/>
</dbReference>
<accession>I1RFN8</accession>
<feature type="chain" id="PRO_0000443913" description="Putative lipase ATG15">
    <location>
        <begin position="1"/>
        <end position="636"/>
    </location>
</feature>
<feature type="topological domain" description="Cytoplasmic" evidence="1">
    <location>
        <begin position="1"/>
        <end position="19"/>
    </location>
</feature>
<feature type="transmembrane region" description="Helical; Signal-anchor for type II membrane protein" evidence="2">
    <location>
        <begin position="20"/>
        <end position="42"/>
    </location>
</feature>
<feature type="topological domain" description="Lumenal" evidence="1">
    <location>
        <begin position="43"/>
        <end position="636"/>
    </location>
</feature>
<feature type="region of interest" description="Disordered" evidence="4">
    <location>
        <begin position="478"/>
        <end position="500"/>
    </location>
</feature>
<feature type="compositionally biased region" description="Low complexity" evidence="4">
    <location>
        <begin position="479"/>
        <end position="500"/>
    </location>
</feature>
<feature type="glycosylation site" description="N-linked (GlcNAc...) asparagine" evidence="3">
    <location>
        <position position="211"/>
    </location>
</feature>
<feature type="glycosylation site" description="N-linked (GlcNAc...) asparagine" evidence="3">
    <location>
        <position position="233"/>
    </location>
</feature>
<feature type="glycosylation site" description="N-linked (GlcNAc...) asparagine" evidence="3">
    <location>
        <position position="291"/>
    </location>
</feature>
<feature type="glycosylation site" description="N-linked (GlcNAc...) asparagine" evidence="3">
    <location>
        <position position="315"/>
    </location>
</feature>
<feature type="glycosylation site" description="N-linked (GlcNAc...) asparagine" evidence="3">
    <location>
        <position position="477"/>
    </location>
</feature>
<proteinExistence type="inferred from homology"/>
<reference key="1">
    <citation type="journal article" date="2007" name="Science">
        <title>The Fusarium graminearum genome reveals a link between localized polymorphism and pathogen specialization.</title>
        <authorList>
            <person name="Cuomo C.A."/>
            <person name="Gueldener U."/>
            <person name="Xu J.-R."/>
            <person name="Trail F."/>
            <person name="Turgeon B.G."/>
            <person name="Di Pietro A."/>
            <person name="Walton J.D."/>
            <person name="Ma L.-J."/>
            <person name="Baker S.E."/>
            <person name="Rep M."/>
            <person name="Adam G."/>
            <person name="Antoniw J."/>
            <person name="Baldwin T."/>
            <person name="Calvo S.E."/>
            <person name="Chang Y.-L."/>
            <person name="DeCaprio D."/>
            <person name="Gale L.R."/>
            <person name="Gnerre S."/>
            <person name="Goswami R.S."/>
            <person name="Hammond-Kosack K."/>
            <person name="Harris L.J."/>
            <person name="Hilburn K."/>
            <person name="Kennell J.C."/>
            <person name="Kroken S."/>
            <person name="Magnuson J.K."/>
            <person name="Mannhaupt G."/>
            <person name="Mauceli E.W."/>
            <person name="Mewes H.-W."/>
            <person name="Mitterbauer R."/>
            <person name="Muehlbauer G."/>
            <person name="Muensterkoetter M."/>
            <person name="Nelson D."/>
            <person name="O'Donnell K."/>
            <person name="Ouellet T."/>
            <person name="Qi W."/>
            <person name="Quesneville H."/>
            <person name="Roncero M.I.G."/>
            <person name="Seong K.-Y."/>
            <person name="Tetko I.V."/>
            <person name="Urban M."/>
            <person name="Waalwijk C."/>
            <person name="Ward T.J."/>
            <person name="Yao J."/>
            <person name="Birren B.W."/>
            <person name="Kistler H.C."/>
        </authorList>
    </citation>
    <scope>NUCLEOTIDE SEQUENCE [LARGE SCALE GENOMIC DNA]</scope>
    <source>
        <strain>ATCC MYA-4620 / CBS 123657 / FGSC 9075 / NRRL 31084 / PH-1</strain>
    </source>
</reference>
<reference key="2">
    <citation type="journal article" date="2010" name="Nature">
        <title>Comparative genomics reveals mobile pathogenicity chromosomes in Fusarium.</title>
        <authorList>
            <person name="Ma L.-J."/>
            <person name="van der Does H.C."/>
            <person name="Borkovich K.A."/>
            <person name="Coleman J.J."/>
            <person name="Daboussi M.-J."/>
            <person name="Di Pietro A."/>
            <person name="Dufresne M."/>
            <person name="Freitag M."/>
            <person name="Grabherr M."/>
            <person name="Henrissat B."/>
            <person name="Houterman P.M."/>
            <person name="Kang S."/>
            <person name="Shim W.-B."/>
            <person name="Woloshuk C."/>
            <person name="Xie X."/>
            <person name="Xu J.-R."/>
            <person name="Antoniw J."/>
            <person name="Baker S.E."/>
            <person name="Bluhm B.H."/>
            <person name="Breakspear A."/>
            <person name="Brown D.W."/>
            <person name="Butchko R.A.E."/>
            <person name="Chapman S."/>
            <person name="Coulson R."/>
            <person name="Coutinho P.M."/>
            <person name="Danchin E.G.J."/>
            <person name="Diener A."/>
            <person name="Gale L.R."/>
            <person name="Gardiner D.M."/>
            <person name="Goff S."/>
            <person name="Hammond-Kosack K.E."/>
            <person name="Hilburn K."/>
            <person name="Hua-Van A."/>
            <person name="Jonkers W."/>
            <person name="Kazan K."/>
            <person name="Kodira C.D."/>
            <person name="Koehrsen M."/>
            <person name="Kumar L."/>
            <person name="Lee Y.-H."/>
            <person name="Li L."/>
            <person name="Manners J.M."/>
            <person name="Miranda-Saavedra D."/>
            <person name="Mukherjee M."/>
            <person name="Park G."/>
            <person name="Park J."/>
            <person name="Park S.-Y."/>
            <person name="Proctor R.H."/>
            <person name="Regev A."/>
            <person name="Ruiz-Roldan M.C."/>
            <person name="Sain D."/>
            <person name="Sakthikumar S."/>
            <person name="Sykes S."/>
            <person name="Schwartz D.C."/>
            <person name="Turgeon B.G."/>
            <person name="Wapinski I."/>
            <person name="Yoder O."/>
            <person name="Young S."/>
            <person name="Zeng Q."/>
            <person name="Zhou S."/>
            <person name="Galagan J."/>
            <person name="Cuomo C.A."/>
            <person name="Kistler H.C."/>
            <person name="Rep M."/>
        </authorList>
    </citation>
    <scope>GENOME REANNOTATION</scope>
    <source>
        <strain>ATCC MYA-4620 / CBS 123657 / FGSC 9075 / NRRL 31084 / PH-1</strain>
    </source>
</reference>
<reference key="3">
    <citation type="journal article" date="2015" name="BMC Genomics">
        <title>The completed genome sequence of the pathogenic ascomycete fungus Fusarium graminearum.</title>
        <authorList>
            <person name="King R."/>
            <person name="Urban M."/>
            <person name="Hammond-Kosack M.C.U."/>
            <person name="Hassani-Pak K."/>
            <person name="Hammond-Kosack K.E."/>
        </authorList>
    </citation>
    <scope>NUCLEOTIDE SEQUENCE [LARGE SCALE GENOMIC DNA]</scope>
    <source>
        <strain>ATCC MYA-4620 / CBS 123657 / FGSC 9075 / NRRL 31084 / PH-1</strain>
    </source>
</reference>
<reference key="4">
    <citation type="journal article" date="2017" name="Sci. Rep.">
        <title>Genome-wide functional analysis reveals that autophagy is necessary for growth, sporulation, deoxynivalenol production and virulence in Fusarium graminearum.</title>
        <authorList>
            <person name="Lv W."/>
            <person name="Wang C."/>
            <person name="Yang N."/>
            <person name="Que Y."/>
            <person name="Talbot N.J."/>
            <person name="Wang Z."/>
        </authorList>
    </citation>
    <scope>IDENTIFICATION</scope>
    <scope>FUNCTION</scope>
    <scope>DISRUPTION PHENOTYPE</scope>
</reference>
<comment type="function">
    <text evidence="1 5">Lipase which is essential for lysis of subvacuolar cytoplasm to vacuole targeted bodies and intravacuolar autophagic bodies (By similarity). Involved in the lysis of intravacuolar multivesicular body (MVB) vesicles (By similarity). The intravacuolar membrane disintegration by ATG15 is critical to life span extension (By similarity). Autophagy is required for proper vegetative growth, asexual/sexual reproduction, and full virulence (PubMed:28894236). Autophagy is particularly involved in the biosynthesis of deoxynivalenol (DON), an important virulence determinant (PubMed:28894236).</text>
</comment>
<comment type="catalytic activity">
    <reaction evidence="1">
        <text>a triacylglycerol + H2O = a diacylglycerol + a fatty acid + H(+)</text>
        <dbReference type="Rhea" id="RHEA:12044"/>
        <dbReference type="ChEBI" id="CHEBI:15377"/>
        <dbReference type="ChEBI" id="CHEBI:15378"/>
        <dbReference type="ChEBI" id="CHEBI:17855"/>
        <dbReference type="ChEBI" id="CHEBI:18035"/>
        <dbReference type="ChEBI" id="CHEBI:28868"/>
        <dbReference type="EC" id="3.1.1.3"/>
    </reaction>
</comment>
<comment type="subunit">
    <text evidence="1">Binds to both phosphatidylinositol (PI) and phosphatidylinositol 3,5-bisphosphate (PIP2) (By similarity).</text>
</comment>
<comment type="subcellular location">
    <subcellularLocation>
        <location evidence="1">Endosome</location>
        <location evidence="1">Multivesicular body membrane</location>
        <topology evidence="1">Single-pass type II membrane protein</topology>
    </subcellularLocation>
    <subcellularLocation>
        <location evidence="1">Prevacuolar compartment membrane</location>
        <topology evidence="1">Single-pass type II membrane protein</topology>
    </subcellularLocation>
    <text evidence="1">From ER, targeted to vacuolar lumen at the MVB vesicles via the Golgi and the prevacuolar compartment (PVC).</text>
</comment>
<comment type="disruption phenotype">
    <text evidence="5">Significantly decreases the radial growth of colonies under nutrient-rich conditions (PubMed:28894236). Strongly reduces conidiation (PubMed:28894236). Strongly reduces the production of deoxynivalenol (DON), an important virulence determinant (PubMed:28894236).</text>
</comment>
<comment type="similarity">
    <text evidence="7">Belongs to the AB hydrolase superfamily. Lipase family.</text>
</comment>
<keyword id="KW-0072">Autophagy</keyword>
<keyword id="KW-0967">Endosome</keyword>
<keyword id="KW-0325">Glycoprotein</keyword>
<keyword id="KW-0378">Hydrolase</keyword>
<keyword id="KW-0442">Lipid degradation</keyword>
<keyword id="KW-0443">Lipid metabolism</keyword>
<keyword id="KW-0472">Membrane</keyword>
<keyword id="KW-1185">Reference proteome</keyword>
<keyword id="KW-0735">Signal-anchor</keyword>
<keyword id="KW-0812">Transmembrane</keyword>
<keyword id="KW-1133">Transmembrane helix</keyword>
<evidence type="ECO:0000250" key="1">
    <source>
        <dbReference type="UniProtKB" id="P25641"/>
    </source>
</evidence>
<evidence type="ECO:0000255" key="2"/>
<evidence type="ECO:0000255" key="3">
    <source>
        <dbReference type="PROSITE-ProRule" id="PRU00498"/>
    </source>
</evidence>
<evidence type="ECO:0000256" key="4">
    <source>
        <dbReference type="SAM" id="MobiDB-lite"/>
    </source>
</evidence>
<evidence type="ECO:0000269" key="5">
    <source>
    </source>
</evidence>
<evidence type="ECO:0000303" key="6">
    <source>
    </source>
</evidence>
<evidence type="ECO:0000305" key="7"/>
<name>ATG15_GIBZE</name>